<name>Y209_SIRV1</name>
<reference key="1">
    <citation type="journal article" date="2001" name="Virology">
        <title>Sequences and replication of genomes of the archaeal rudiviruses SIRV1 and SIRV2: relationships to the archaeal lipothrixvirus SIFV and some eukaryal viruses.</title>
        <authorList>
            <person name="Peng X."/>
            <person name="Blum H."/>
            <person name="She Q."/>
            <person name="Mallok S."/>
            <person name="Bruegger K."/>
            <person name="Garrett R.A."/>
            <person name="Zillig W."/>
            <person name="Prangishvili D."/>
        </authorList>
    </citation>
    <scope>NUCLEOTIDE SEQUENCE [LARGE SCALE GENOMIC DNA]</scope>
    <source>
        <strain>Isolate variant VIII</strain>
    </source>
</reference>
<reference key="2">
    <citation type="journal article" date="2004" name="Mol. Microbiol.">
        <title>Multiple variants of the archaeal DNA rudivirus SIRV1 in a single host and a novel mechanism of genomic variation.</title>
        <authorList>
            <person name="Peng X."/>
            <person name="Kessler A."/>
            <person name="Phan H."/>
            <person name="Garrett R.A."/>
            <person name="Prangishvili D."/>
        </authorList>
    </citation>
    <scope>NUCLEOTIDE SEQUENCE [LARGE SCALE GENOMIC DNA]</scope>
    <source>
        <strain>Isolate variant XX</strain>
    </source>
</reference>
<dbReference type="EMBL" id="AJ414696">
    <property type="protein sequence ID" value="CAC93990.1"/>
    <property type="molecule type" value="Genomic_DNA"/>
</dbReference>
<dbReference type="EMBL" id="AJ748296">
    <property type="protein sequence ID" value="CAG38854.1"/>
    <property type="molecule type" value="Genomic_DNA"/>
</dbReference>
<dbReference type="RefSeq" id="NP_666623.1">
    <property type="nucleotide sequence ID" value="NC_004087.1"/>
</dbReference>
<dbReference type="KEGG" id="vg:951364"/>
<dbReference type="OrthoDB" id="12283at10239"/>
<dbReference type="Proteomes" id="UP000002270">
    <property type="component" value="Genome"/>
</dbReference>
<dbReference type="Proteomes" id="UP000223181">
    <property type="component" value="Segment"/>
</dbReference>
<sequence length="209" mass="25234">MSYCLEIIMKIFTFVGFTKHLDELDFDYVVVDKTFNDMSDDQIKKYQEKIIWIMTNTEIRWLRIAKQLLTIVNFAKNIEDDIIAIIDSDLIIPNLREIIPNERIFTPCYWLYYDWANEIRPFCSGTNYIFRKSLLPYLEYTINTYIENEYYKEIPVDIFIHNFIPHMNILKLGTIHYVKTPIGEIKMEFRYEDIQQIFKHIPEFVLLIG</sequence>
<feature type="chain" id="PRO_0000342301" description="Uncharacterized protein 209">
    <location>
        <begin position="1"/>
        <end position="209"/>
    </location>
</feature>
<accession>Q8QL21</accession>
<accession>Q5TJ84</accession>
<protein>
    <recommendedName>
        <fullName>Uncharacterized protein 209</fullName>
    </recommendedName>
</protein>
<proteinExistence type="predicted"/>
<keyword id="KW-1185">Reference proteome</keyword>
<organism>
    <name type="scientific">Sulfolobus islandicus rod-shaped virus 1</name>
    <name type="common">SIRV-1</name>
    <name type="synonym">Sulfolobus virus SIRV-1</name>
    <dbReference type="NCBI Taxonomy" id="157898"/>
    <lineage>
        <taxon>Viruses</taxon>
        <taxon>Adnaviria</taxon>
        <taxon>Zilligvirae</taxon>
        <taxon>Taleaviricota</taxon>
        <taxon>Tokiviricetes</taxon>
        <taxon>Ligamenvirales</taxon>
        <taxon>Rudiviridae</taxon>
        <taxon>Icerudivirus</taxon>
        <taxon>Icerudivirus SIRV1</taxon>
    </lineage>
</organism>
<gene>
    <name type="ORF">209</name>
</gene>
<organismHost>
    <name type="scientific">Saccharolobus islandicus</name>
    <name type="common">Sulfolobus islandicus</name>
    <dbReference type="NCBI Taxonomy" id="43080"/>
</organismHost>